<evidence type="ECO:0000250" key="1"/>
<evidence type="ECO:0000255" key="2">
    <source>
        <dbReference type="PROSITE-ProRule" id="PRU00159"/>
    </source>
</evidence>
<evidence type="ECO:0000255" key="3">
    <source>
        <dbReference type="PROSITE-ProRule" id="PRU00618"/>
    </source>
</evidence>
<evidence type="ECO:0000255" key="4">
    <source>
        <dbReference type="PROSITE-ProRule" id="PRU10027"/>
    </source>
</evidence>
<evidence type="ECO:0000256" key="5">
    <source>
        <dbReference type="SAM" id="MobiDB-lite"/>
    </source>
</evidence>
<evidence type="ECO:0000269" key="6">
    <source>
    </source>
</evidence>
<evidence type="ECO:0000269" key="7">
    <source>
    </source>
</evidence>
<evidence type="ECO:0000269" key="8">
    <source>
    </source>
</evidence>
<evidence type="ECO:0000269" key="9">
    <source>
    </source>
</evidence>
<evidence type="ECO:0000269" key="10">
    <source>
    </source>
</evidence>
<evidence type="ECO:0000269" key="11">
    <source>
    </source>
</evidence>
<evidence type="ECO:0000269" key="12">
    <source>
    </source>
</evidence>
<evidence type="ECO:0000269" key="13">
    <source>
    </source>
</evidence>
<evidence type="ECO:0000305" key="14"/>
<gene>
    <name type="primary">mastl</name>
    <name type="synonym">gw</name>
    <name type="synonym">gwl</name>
</gene>
<accession>Q6NTJ3</accession>
<proteinExistence type="evidence at protein level"/>
<reference key="1">
    <citation type="journal article" date="2006" name="Mol. Cell">
        <title>Greatwall kinase participates in the Cdc2 autoregulatory loop in Xenopus egg extracts.</title>
        <authorList>
            <person name="Yu J."/>
            <person name="Zhao Y."/>
            <person name="Li Z."/>
            <person name="Galas S."/>
            <person name="Goldberg M.L."/>
        </authorList>
    </citation>
    <scope>NUCLEOTIDE SEQUENCE [MRNA]</scope>
    <scope>FUNCTION</scope>
    <scope>PHOSPHORYLATION AT THR-221; THR-244; SER-363; SER-465; SER-654; SER-677 AND THR-748</scope>
    <scope>MUTAGENESIS OF GLY-41; ASP-173; THR-221; THR-244; SER-363; SER-465; SER-654; SER-677 AND THR-748</scope>
</reference>
<reference key="2">
    <citation type="submission" date="2004-04" db="EMBL/GenBank/DDBJ databases">
        <authorList>
            <consortium name="NIH - Xenopus Gene Collection (XGC) project"/>
        </authorList>
    </citation>
    <scope>NUCLEOTIDE SEQUENCE [LARGE SCALE MRNA]</scope>
    <source>
        <tissue>Embryo</tissue>
    </source>
</reference>
<reference key="3">
    <citation type="journal article" date="2008" name="Mol. Biol. Cell">
        <title>Roles of Greatwall kinase in the regulation of cdc25 phosphatase.</title>
        <authorList>
            <person name="Zhao Y."/>
            <person name="Haccard O."/>
            <person name="Wang R."/>
            <person name="Yu J."/>
            <person name="Kuang J."/>
            <person name="Jessus C."/>
            <person name="Goldberg M.L."/>
        </authorList>
    </citation>
    <scope>FUNCTION</scope>
</reference>
<reference key="4">
    <citation type="journal article" date="2009" name="EMBO J.">
        <title>Greatwall maintains mitosis through regulation of PP2A.</title>
        <authorList>
            <person name="Vigneron S."/>
            <person name="Brioudes E."/>
            <person name="Burgess A."/>
            <person name="Labbe J.C."/>
            <person name="Lorca T."/>
            <person name="Castro A."/>
        </authorList>
    </citation>
    <scope>FUNCTION</scope>
</reference>
<reference key="5">
    <citation type="journal article" date="2009" name="Mol. Biol. Cell">
        <title>The M phase kinase Greatwall (Gwl) promotes inactivation of PP2A/B55delta, a phosphatase directed against CDK phosphosites.</title>
        <authorList>
            <person name="Castilho P.V."/>
            <person name="Williams B.C."/>
            <person name="Mochida S."/>
            <person name="Zhao Y."/>
            <person name="Goldberg M.L."/>
        </authorList>
    </citation>
    <scope>FUNCTION</scope>
</reference>
<reference key="6">
    <citation type="journal article" date="2010" name="Cell Cycle">
        <title>A novel role for greatwall kinase in recovery from DNA damage.</title>
        <authorList>
            <person name="Peng A."/>
            <person name="Yamamoto T.M."/>
            <person name="Goldberg M.L."/>
            <person name="Maller J.L."/>
        </authorList>
    </citation>
    <scope>FUNCTION</scope>
</reference>
<reference key="7">
    <citation type="journal article" date="2010" name="J. Cell Sci.">
        <title>Constant regulation of both the MPF amplification loop and the Greatwall-PP2A pathway is required for metaphase II arrest and correct entry into the first embryonic cell cycle.</title>
        <authorList>
            <person name="Lorca T."/>
            <person name="Bernis C."/>
            <person name="Vigneron S."/>
            <person name="Burgess A."/>
            <person name="Brioudes E."/>
            <person name="Labbe J.C."/>
            <person name="Castro A."/>
        </authorList>
    </citation>
    <scope>FUNCTION</scope>
</reference>
<reference key="8">
    <citation type="journal article" date="2010" name="Science">
        <title>Greatwall phosphorylates an inhibitor of protein phosphatase 2A that is essential for mitosis.</title>
        <authorList>
            <person name="Mochida S."/>
            <person name="Maslen S.L."/>
            <person name="Skehel M."/>
            <person name="Hunt T."/>
        </authorList>
    </citation>
    <scope>FUNCTION</scope>
    <scope>CATALYTIC ACTIVITY</scope>
    <scope>INTERACTION WITH ARPP19 AND ENSA</scope>
</reference>
<reference key="9">
    <citation type="journal article" date="2010" name="Science">
        <title>The substrate of Greatwall kinase, Arpp19, controls mitosis by inhibiting protein phosphatase 2A.</title>
        <authorList>
            <person name="Gharbi-Ayachi A."/>
            <person name="Labbe J.C."/>
            <person name="Burgess A."/>
            <person name="Vigneron S."/>
            <person name="Strub J.M."/>
            <person name="Brioudes E."/>
            <person name="Van-Dorsselaer A."/>
            <person name="Castro A."/>
            <person name="Lorca T."/>
        </authorList>
    </citation>
    <scope>FUNCTION</scope>
    <scope>CATALYTIC ACTIVITY</scope>
    <scope>INTERACTION WITH ARPP19 AND ENSA</scope>
</reference>
<keyword id="KW-0067">ATP-binding</keyword>
<keyword id="KW-0131">Cell cycle</keyword>
<keyword id="KW-0132">Cell division</keyword>
<keyword id="KW-0963">Cytoplasm</keyword>
<keyword id="KW-0206">Cytoskeleton</keyword>
<keyword id="KW-0227">DNA damage</keyword>
<keyword id="KW-0418">Kinase</keyword>
<keyword id="KW-0498">Mitosis</keyword>
<keyword id="KW-0547">Nucleotide-binding</keyword>
<keyword id="KW-0539">Nucleus</keyword>
<keyword id="KW-0597">Phosphoprotein</keyword>
<keyword id="KW-1185">Reference proteome</keyword>
<keyword id="KW-0723">Serine/threonine-protein kinase</keyword>
<keyword id="KW-0808">Transferase</keyword>
<name>GWL_XENLA</name>
<comment type="function">
    <text evidence="6 7 8 9 10 11 12 13">Serine/threonine kinase that plays a key role in M phase by acting as a regulator of mitosis entry and maintenance. Acts by promoting the inactivation of protein phosphatase 2A (PP2A) during M phase: does not directly inhibit PP2A but acts by mediating phosphorylation and subsequent activation of arpp19 and ensa at 'Ser-67', 2 phosphatase inhibitors that specifically inhibit the ppp2r2d (PR55-delta) subunit of PP2A. Inactivation of PP2A during M phase is essential to keep cyclin-B1-CDK1 activity high. Following DNA damage, it is also involved in checkpoint recovery by being inhibited.</text>
</comment>
<comment type="catalytic activity">
    <reaction evidence="12 13">
        <text>L-seryl-[protein] + ATP = O-phospho-L-seryl-[protein] + ADP + H(+)</text>
        <dbReference type="Rhea" id="RHEA:17989"/>
        <dbReference type="Rhea" id="RHEA-COMP:9863"/>
        <dbReference type="Rhea" id="RHEA-COMP:11604"/>
        <dbReference type="ChEBI" id="CHEBI:15378"/>
        <dbReference type="ChEBI" id="CHEBI:29999"/>
        <dbReference type="ChEBI" id="CHEBI:30616"/>
        <dbReference type="ChEBI" id="CHEBI:83421"/>
        <dbReference type="ChEBI" id="CHEBI:456216"/>
        <dbReference type="EC" id="2.7.11.1"/>
    </reaction>
</comment>
<comment type="catalytic activity">
    <reaction evidence="12 13">
        <text>L-threonyl-[protein] + ATP = O-phospho-L-threonyl-[protein] + ADP + H(+)</text>
        <dbReference type="Rhea" id="RHEA:46608"/>
        <dbReference type="Rhea" id="RHEA-COMP:11060"/>
        <dbReference type="Rhea" id="RHEA-COMP:11605"/>
        <dbReference type="ChEBI" id="CHEBI:15378"/>
        <dbReference type="ChEBI" id="CHEBI:30013"/>
        <dbReference type="ChEBI" id="CHEBI:30616"/>
        <dbReference type="ChEBI" id="CHEBI:61977"/>
        <dbReference type="ChEBI" id="CHEBI:456216"/>
        <dbReference type="EC" id="2.7.11.1"/>
    </reaction>
</comment>
<comment type="subunit">
    <text evidence="12 13">Interacts with arpp19 and ensa, leading to their phosphorylation.</text>
</comment>
<comment type="subcellular location">
    <subcellularLocation>
        <location evidence="1">Cytoplasm</location>
        <location evidence="1">Cytoskeleton</location>
        <location evidence="1">Microtubule organizing center</location>
        <location evidence="1">Centrosome</location>
    </subcellularLocation>
    <subcellularLocation>
        <location>Nucleus</location>
    </subcellularLocation>
    <text evidence="1">During interphase is mainly nuclear, upon nuclear envelope breakdown localizes at the cytoplasm and during mitosis at the centrosomes.</text>
</comment>
<comment type="PTM">
    <text evidence="6">Phosphorylation at Thr-748 by CDK1 during M phase activates its kinase activity. Not active during other phases of the cell cycle. Has the ability to autophosphorylate.</text>
</comment>
<comment type="similarity">
    <text evidence="14">Belongs to the protein kinase superfamily. AGC Ser/Thr protein kinase family.</text>
</comment>
<organism>
    <name type="scientific">Xenopus laevis</name>
    <name type="common">African clawed frog</name>
    <dbReference type="NCBI Taxonomy" id="8355"/>
    <lineage>
        <taxon>Eukaryota</taxon>
        <taxon>Metazoa</taxon>
        <taxon>Chordata</taxon>
        <taxon>Craniata</taxon>
        <taxon>Vertebrata</taxon>
        <taxon>Euteleostomi</taxon>
        <taxon>Amphibia</taxon>
        <taxon>Batrachia</taxon>
        <taxon>Anura</taxon>
        <taxon>Pipoidea</taxon>
        <taxon>Pipidae</taxon>
        <taxon>Xenopodinae</taxon>
        <taxon>Xenopus</taxon>
        <taxon>Xenopus</taxon>
    </lineage>
</organism>
<protein>
    <recommendedName>
        <fullName>Serine/threonine-protein kinase greatwall</fullName>
        <shortName>GW</shortName>
        <shortName>GWL</shortName>
        <ecNumber>2.7.11.1</ecNumber>
    </recommendedName>
    <alternativeName>
        <fullName>Microtubule-associated serine/threonine-protein kinase-like</fullName>
        <shortName>MAST-L</shortName>
    </alternativeName>
</protein>
<sequence length="887" mass="98683">MGIVAETSQNGDTSLCSEKKFTVPQPPSIEEFGIVKPISRGAFGKVYLARRKNNSKLFAVKVVKKADMINKNMVQQVQAERDALALSKSPFIVHLYYSLQSANNIYLVMEYLIGGDVKSLLHIYGYFDEEMAVKYISEVAMALDYLHRHGIIHRDLKPDNMLISNKGHIKLTDFGLSKVTLKRELCMMDILTTPSMAKPKRDYSRTPGQVLSLISSLGFNTPAGGRTQGSLNQQTEGMRGNASTPLLMKKRESLVKGNKLMISCPEASLSSPSIPVKCLTPNLLKCRTQFATSSTSSQSRICLSSLESECGSPRWENCSQDAEAPPYFNSSRVKDSSSEQARSKKPTGSSASQNLKRLEFAFSPIVDRRTGKKAGFQDETGELSDTPLATLNAKGVIRKCLYENKAQEKPKDFDKTGQGELGKFTSSPDSPPWLANGSVAPIQFNDEEKTEKMGVKRNYDLVEKSPEQELLQDKKTNTDYKRGCAITDYPVSQSTGLTMEINSLFLSELRNSANKYASDRKSEDKYISAPRTLEKLDSGNPVAKNLLCELDDNCERDGEVSSTSEGEDRKERLNQDSSSTGMSVTENQIDRDLSHVDKSIKELSFEESQSENSEEITPDNKGIPFMAENDERVQSKYEPNTSILPDSLQNVLASPAPASAMTNPRRKPMVAFRSYNSPINVSNVSEPSKISMNSADKIHFSLECTGSFPMAVTPAQNKVQGLIETPYRTPKSVRRGGIQVDHERILGTPDYLAPELLLRKSHGPAVDWWALGVCLFEFLTGIPPFNDETPSQVFQNILNRDIPWPEEEEEVLSVNAQSAIEILLTIDPTKRAGLKDLKAHPLFHGMEWEELQYQPMSFIPQPDDETDTTYFEARNNAQHLKVSGFSL</sequence>
<dbReference type="EC" id="2.7.11.1"/>
<dbReference type="EMBL" id="AY644649">
    <property type="protein sequence ID" value="AAT65679.1"/>
    <property type="molecule type" value="mRNA"/>
</dbReference>
<dbReference type="EMBL" id="BC068968">
    <property type="protein sequence ID" value="AAH68968.1"/>
    <property type="molecule type" value="mRNA"/>
</dbReference>
<dbReference type="RefSeq" id="NP_001084629.1">
    <property type="nucleotide sequence ID" value="NM_001091160.1"/>
</dbReference>
<dbReference type="SMR" id="Q6NTJ3"/>
<dbReference type="BioGRID" id="101007">
    <property type="interactions" value="5"/>
</dbReference>
<dbReference type="IntAct" id="Q6NTJ3">
    <property type="interactions" value="2"/>
</dbReference>
<dbReference type="MINT" id="Q6NTJ3"/>
<dbReference type="iPTMnet" id="Q6NTJ3"/>
<dbReference type="DNASU" id="414585"/>
<dbReference type="GeneID" id="414585"/>
<dbReference type="KEGG" id="xla:414585"/>
<dbReference type="AGR" id="Xenbase:XB-GENE-964551"/>
<dbReference type="CTD" id="414585"/>
<dbReference type="Xenbase" id="XB-GENE-964551">
    <property type="gene designation" value="mastl.L"/>
</dbReference>
<dbReference type="OrthoDB" id="162894at2759"/>
<dbReference type="Proteomes" id="UP000186698">
    <property type="component" value="Chromosome 6L"/>
</dbReference>
<dbReference type="Bgee" id="414585">
    <property type="expression patterns" value="Expressed in blastula and 19 other cell types or tissues"/>
</dbReference>
<dbReference type="GO" id="GO:0005813">
    <property type="term" value="C:centrosome"/>
    <property type="evidence" value="ECO:0000250"/>
    <property type="project" value="UniProtKB"/>
</dbReference>
<dbReference type="GO" id="GO:0032154">
    <property type="term" value="C:cleavage furrow"/>
    <property type="evidence" value="ECO:0000250"/>
    <property type="project" value="UniProtKB"/>
</dbReference>
<dbReference type="GO" id="GO:0005737">
    <property type="term" value="C:cytoplasm"/>
    <property type="evidence" value="ECO:0007669"/>
    <property type="project" value="UniProtKB-KW"/>
</dbReference>
<dbReference type="GO" id="GO:0005654">
    <property type="term" value="C:nucleoplasm"/>
    <property type="evidence" value="ECO:0000304"/>
    <property type="project" value="Reactome"/>
</dbReference>
<dbReference type="GO" id="GO:0005634">
    <property type="term" value="C:nucleus"/>
    <property type="evidence" value="ECO:0000250"/>
    <property type="project" value="UniProtKB"/>
</dbReference>
<dbReference type="GO" id="GO:0005524">
    <property type="term" value="F:ATP binding"/>
    <property type="evidence" value="ECO:0007669"/>
    <property type="project" value="UniProtKB-KW"/>
</dbReference>
<dbReference type="GO" id="GO:0051721">
    <property type="term" value="F:protein phosphatase 2A binding"/>
    <property type="evidence" value="ECO:0000314"/>
    <property type="project" value="UniProtKB"/>
</dbReference>
<dbReference type="GO" id="GO:0106310">
    <property type="term" value="F:protein serine kinase activity"/>
    <property type="evidence" value="ECO:0007669"/>
    <property type="project" value="RHEA"/>
</dbReference>
<dbReference type="GO" id="GO:0004674">
    <property type="term" value="F:protein serine/threonine kinase activity"/>
    <property type="evidence" value="ECO:0000314"/>
    <property type="project" value="UniProtKB"/>
</dbReference>
<dbReference type="GO" id="GO:0051301">
    <property type="term" value="P:cell division"/>
    <property type="evidence" value="ECO:0007669"/>
    <property type="project" value="UniProtKB-KW"/>
</dbReference>
<dbReference type="GO" id="GO:0006974">
    <property type="term" value="P:DNA damage response"/>
    <property type="evidence" value="ECO:0000314"/>
    <property type="project" value="UniProtKB"/>
</dbReference>
<dbReference type="GO" id="GO:0000086">
    <property type="term" value="P:G2/M transition of mitotic cell cycle"/>
    <property type="evidence" value="ECO:0000315"/>
    <property type="project" value="UniProtKB"/>
</dbReference>
<dbReference type="GO" id="GO:0035556">
    <property type="term" value="P:intracellular signal transduction"/>
    <property type="evidence" value="ECO:0000318"/>
    <property type="project" value="GO_Central"/>
</dbReference>
<dbReference type="GO" id="GO:0000278">
    <property type="term" value="P:mitotic cell cycle"/>
    <property type="evidence" value="ECO:0000315"/>
    <property type="project" value="UniProtKB"/>
</dbReference>
<dbReference type="GO" id="GO:0046777">
    <property type="term" value="P:protein autophosphorylation"/>
    <property type="evidence" value="ECO:0000304"/>
    <property type="project" value="UniProtKB"/>
</dbReference>
<dbReference type="CDD" id="cd05610">
    <property type="entry name" value="STKc_MASTL"/>
    <property type="match status" value="1"/>
</dbReference>
<dbReference type="FunFam" id="1.10.510.10:FF:000278">
    <property type="entry name" value="serine/threonine-protein kinase greatwall isoform X1"/>
    <property type="match status" value="1"/>
</dbReference>
<dbReference type="FunFam" id="3.30.200.20:FF:000277">
    <property type="entry name" value="serine/threonine-protein kinase greatwall isoform X1"/>
    <property type="match status" value="1"/>
</dbReference>
<dbReference type="FunFam" id="1.10.510.10:FF:000484">
    <property type="entry name" value="Serine/threonine-protein kinase greatwall, putative"/>
    <property type="match status" value="1"/>
</dbReference>
<dbReference type="Gene3D" id="3.30.200.20">
    <property type="entry name" value="Phosphorylase Kinase, domain 1"/>
    <property type="match status" value="2"/>
</dbReference>
<dbReference type="Gene3D" id="1.10.510.10">
    <property type="entry name" value="Transferase(Phosphotransferase) domain 1"/>
    <property type="match status" value="2"/>
</dbReference>
<dbReference type="InterPro" id="IPR000961">
    <property type="entry name" value="AGC-kinase_C"/>
</dbReference>
<dbReference type="InterPro" id="IPR011009">
    <property type="entry name" value="Kinase-like_dom_sf"/>
</dbReference>
<dbReference type="InterPro" id="IPR037638">
    <property type="entry name" value="MASTL_STKc"/>
</dbReference>
<dbReference type="InterPro" id="IPR000719">
    <property type="entry name" value="Prot_kinase_dom"/>
</dbReference>
<dbReference type="InterPro" id="IPR008271">
    <property type="entry name" value="Ser/Thr_kinase_AS"/>
</dbReference>
<dbReference type="InterPro" id="IPR050236">
    <property type="entry name" value="Ser_Thr_kinase_AGC"/>
</dbReference>
<dbReference type="PANTHER" id="PTHR24356">
    <property type="entry name" value="SERINE/THREONINE-PROTEIN KINASE"/>
    <property type="match status" value="1"/>
</dbReference>
<dbReference type="PANTHER" id="PTHR24356:SF1">
    <property type="entry name" value="SERINE_THREONINE-PROTEIN KINASE GREATWALL"/>
    <property type="match status" value="1"/>
</dbReference>
<dbReference type="Pfam" id="PF00069">
    <property type="entry name" value="Pkinase"/>
    <property type="match status" value="2"/>
</dbReference>
<dbReference type="SMART" id="SM00220">
    <property type="entry name" value="S_TKc"/>
    <property type="match status" value="1"/>
</dbReference>
<dbReference type="SUPFAM" id="SSF56112">
    <property type="entry name" value="Protein kinase-like (PK-like)"/>
    <property type="match status" value="1"/>
</dbReference>
<dbReference type="PROSITE" id="PS51285">
    <property type="entry name" value="AGC_KINASE_CTER"/>
    <property type="match status" value="1"/>
</dbReference>
<dbReference type="PROSITE" id="PS50011">
    <property type="entry name" value="PROTEIN_KINASE_DOM"/>
    <property type="match status" value="1"/>
</dbReference>
<dbReference type="PROSITE" id="PS00108">
    <property type="entry name" value="PROTEIN_KINASE_ST"/>
    <property type="match status" value="1"/>
</dbReference>
<feature type="chain" id="PRO_0000408318" description="Serine/threonine-protein kinase greatwall">
    <location>
        <begin position="1"/>
        <end position="887"/>
    </location>
</feature>
<feature type="domain" description="Protein kinase" evidence="2">
    <location>
        <begin position="32"/>
        <end position="843"/>
    </location>
</feature>
<feature type="domain" description="AGC-kinase C-terminal" evidence="3">
    <location>
        <begin position="844"/>
        <end position="887"/>
    </location>
</feature>
<feature type="region of interest" description="Disordered" evidence="5">
    <location>
        <begin position="321"/>
        <end position="353"/>
    </location>
</feature>
<feature type="region of interest" description="Disordered" evidence="5">
    <location>
        <begin position="410"/>
        <end position="435"/>
    </location>
</feature>
<feature type="region of interest" description="Disordered" evidence="5">
    <location>
        <begin position="556"/>
        <end position="624"/>
    </location>
</feature>
<feature type="compositionally biased region" description="Polar residues" evidence="5">
    <location>
        <begin position="575"/>
        <end position="587"/>
    </location>
</feature>
<feature type="compositionally biased region" description="Basic and acidic residues" evidence="5">
    <location>
        <begin position="588"/>
        <end position="604"/>
    </location>
</feature>
<feature type="compositionally biased region" description="Acidic residues" evidence="5">
    <location>
        <begin position="608"/>
        <end position="617"/>
    </location>
</feature>
<feature type="active site" description="Proton acceptor" evidence="2 4">
    <location>
        <position position="155"/>
    </location>
</feature>
<feature type="binding site" evidence="14">
    <location>
        <begin position="38"/>
        <end position="46"/>
    </location>
    <ligand>
        <name>ATP</name>
        <dbReference type="ChEBI" id="CHEBI:30616"/>
    </ligand>
</feature>
<feature type="binding site" evidence="2">
    <location>
        <position position="61"/>
    </location>
    <ligand>
        <name>ATP</name>
        <dbReference type="ChEBI" id="CHEBI:30616"/>
    </ligand>
</feature>
<feature type="modified residue" description="Phosphothreonine; by CDK1; in vitro" evidence="6">
    <location>
        <position position="221"/>
    </location>
</feature>
<feature type="modified residue" description="Phosphothreonine; by CDK1; in vitro" evidence="6">
    <location>
        <position position="244"/>
    </location>
</feature>
<feature type="modified residue" description="Phosphoserine; by CDK1; in vitro" evidence="6">
    <location>
        <position position="363"/>
    </location>
</feature>
<feature type="modified residue" description="Phosphoserine; by CDK1; in vitro" evidence="6">
    <location>
        <position position="465"/>
    </location>
</feature>
<feature type="modified residue" description="Phosphoserine; by CDK1; in vitro" evidence="6">
    <location>
        <position position="654"/>
    </location>
</feature>
<feature type="modified residue" description="Phosphoserine; by CDK1; in vitro" evidence="6">
    <location>
        <position position="677"/>
    </location>
</feature>
<feature type="modified residue" description="Phosphothreonine; by CDK1" evidence="6">
    <location>
        <position position="748"/>
    </location>
</feature>
<feature type="mutagenesis site" description="Abolishes serine/threonine-protein kinase activity and ability to regulate mitosis." evidence="6">
    <original>G</original>
    <variation>S</variation>
    <location>
        <position position="41"/>
    </location>
</feature>
<feature type="mutagenesis site" description="Abolishes serine/threonine-protein kinase activity and ability to regulate mitosis." evidence="6">
    <original>D</original>
    <variation>A</variation>
    <location>
        <position position="173"/>
    </location>
</feature>
<feature type="mutagenesis site" description="No effect." evidence="6">
    <original>T</original>
    <variation>A</variation>
    <location>
        <position position="221"/>
    </location>
</feature>
<feature type="mutagenesis site" description="No effect." evidence="6">
    <original>T</original>
    <variation>A</variation>
    <location>
        <position position="244"/>
    </location>
</feature>
<feature type="mutagenesis site" description="No effect." evidence="6">
    <original>S</original>
    <variation>A</variation>
    <location>
        <position position="363"/>
    </location>
</feature>
<feature type="mutagenesis site" description="No effect." evidence="6">
    <original>S</original>
    <variation>A</variation>
    <location>
        <position position="465"/>
    </location>
</feature>
<feature type="mutagenesis site" description="No effect." evidence="6">
    <original>S</original>
    <variation>A</variation>
    <location>
        <position position="654"/>
    </location>
</feature>
<feature type="mutagenesis site" description="No effect." evidence="6">
    <original>S</original>
    <variation>A</variation>
    <location>
        <position position="677"/>
    </location>
</feature>
<feature type="mutagenesis site" description="Abolishes the ability to regulate M phase." evidence="6">
    <original>T</original>
    <variation>A</variation>
    <location>
        <position position="748"/>
    </location>
</feature>